<gene>
    <name evidence="1" type="primary">murG</name>
    <name type="ordered locus">TT_C0719</name>
</gene>
<accession>Q72JP9</accession>
<proteinExistence type="inferred from homology"/>
<comment type="function">
    <text evidence="1">Cell wall formation. Catalyzes the transfer of a GlcNAc subunit on undecaprenyl-pyrophosphoryl-MurNAc-pentapeptide (lipid intermediate I) to form undecaprenyl-pyrophosphoryl-MurNAc-(pentapeptide)GlcNAc (lipid intermediate II).</text>
</comment>
<comment type="catalytic activity">
    <reaction evidence="1">
        <text>di-trans,octa-cis-undecaprenyl diphospho-N-acetyl-alpha-D-muramoyl-L-alanyl-D-glutamyl-meso-2,6-diaminopimeloyl-D-alanyl-D-alanine + UDP-N-acetyl-alpha-D-glucosamine = di-trans,octa-cis-undecaprenyl diphospho-[N-acetyl-alpha-D-glucosaminyl-(1-&gt;4)]-N-acetyl-alpha-D-muramoyl-L-alanyl-D-glutamyl-meso-2,6-diaminopimeloyl-D-alanyl-D-alanine + UDP + H(+)</text>
        <dbReference type="Rhea" id="RHEA:31227"/>
        <dbReference type="ChEBI" id="CHEBI:15378"/>
        <dbReference type="ChEBI" id="CHEBI:57705"/>
        <dbReference type="ChEBI" id="CHEBI:58223"/>
        <dbReference type="ChEBI" id="CHEBI:61387"/>
        <dbReference type="ChEBI" id="CHEBI:61388"/>
        <dbReference type="EC" id="2.4.1.227"/>
    </reaction>
</comment>
<comment type="pathway">
    <text evidence="1">Cell wall biogenesis; peptidoglycan biosynthesis.</text>
</comment>
<comment type="subcellular location">
    <subcellularLocation>
        <location evidence="1">Cell inner membrane</location>
        <topology evidence="1">Peripheral membrane protein</topology>
        <orientation evidence="1">Cytoplasmic side</orientation>
    </subcellularLocation>
</comment>
<comment type="similarity">
    <text evidence="1">Belongs to the glycosyltransferase 28 family. MurG subfamily.</text>
</comment>
<dbReference type="EC" id="2.4.1.227" evidence="1"/>
<dbReference type="EMBL" id="AE017221">
    <property type="protein sequence ID" value="AAS81067.1"/>
    <property type="molecule type" value="Genomic_DNA"/>
</dbReference>
<dbReference type="RefSeq" id="WP_011173158.1">
    <property type="nucleotide sequence ID" value="NC_005835.1"/>
</dbReference>
<dbReference type="SMR" id="Q72JP9"/>
<dbReference type="CAZy" id="GT28">
    <property type="family name" value="Glycosyltransferase Family 28"/>
</dbReference>
<dbReference type="KEGG" id="tth:TT_C0719"/>
<dbReference type="eggNOG" id="COG0707">
    <property type="taxonomic scope" value="Bacteria"/>
</dbReference>
<dbReference type="HOGENOM" id="CLU_037404_2_0_0"/>
<dbReference type="OrthoDB" id="9808936at2"/>
<dbReference type="UniPathway" id="UPA00219"/>
<dbReference type="Proteomes" id="UP000000592">
    <property type="component" value="Chromosome"/>
</dbReference>
<dbReference type="GO" id="GO:0005886">
    <property type="term" value="C:plasma membrane"/>
    <property type="evidence" value="ECO:0007669"/>
    <property type="project" value="UniProtKB-SubCell"/>
</dbReference>
<dbReference type="GO" id="GO:0051991">
    <property type="term" value="F:UDP-N-acetyl-D-glucosamine:N-acetylmuramoyl-L-alanyl-D-glutamyl-meso-2,6-diaminopimelyl-D-alanyl-D-alanine-diphosphoundecaprenol 4-beta-N-acetylglucosaminlytransferase activity"/>
    <property type="evidence" value="ECO:0007669"/>
    <property type="project" value="RHEA"/>
</dbReference>
<dbReference type="GO" id="GO:0050511">
    <property type="term" value="F:undecaprenyldiphospho-muramoylpentapeptide beta-N-acetylglucosaminyltransferase activity"/>
    <property type="evidence" value="ECO:0007669"/>
    <property type="project" value="UniProtKB-UniRule"/>
</dbReference>
<dbReference type="GO" id="GO:0005975">
    <property type="term" value="P:carbohydrate metabolic process"/>
    <property type="evidence" value="ECO:0007669"/>
    <property type="project" value="InterPro"/>
</dbReference>
<dbReference type="GO" id="GO:0051301">
    <property type="term" value="P:cell division"/>
    <property type="evidence" value="ECO:0007669"/>
    <property type="project" value="UniProtKB-KW"/>
</dbReference>
<dbReference type="GO" id="GO:0071555">
    <property type="term" value="P:cell wall organization"/>
    <property type="evidence" value="ECO:0007669"/>
    <property type="project" value="UniProtKB-KW"/>
</dbReference>
<dbReference type="GO" id="GO:0030259">
    <property type="term" value="P:lipid glycosylation"/>
    <property type="evidence" value="ECO:0007669"/>
    <property type="project" value="UniProtKB-UniRule"/>
</dbReference>
<dbReference type="GO" id="GO:0009252">
    <property type="term" value="P:peptidoglycan biosynthetic process"/>
    <property type="evidence" value="ECO:0007669"/>
    <property type="project" value="UniProtKB-UniRule"/>
</dbReference>
<dbReference type="GO" id="GO:0008360">
    <property type="term" value="P:regulation of cell shape"/>
    <property type="evidence" value="ECO:0007669"/>
    <property type="project" value="UniProtKB-KW"/>
</dbReference>
<dbReference type="CDD" id="cd03785">
    <property type="entry name" value="GT28_MurG"/>
    <property type="match status" value="1"/>
</dbReference>
<dbReference type="Gene3D" id="3.40.50.2000">
    <property type="entry name" value="Glycogen Phosphorylase B"/>
    <property type="match status" value="2"/>
</dbReference>
<dbReference type="HAMAP" id="MF_00033">
    <property type="entry name" value="MurG"/>
    <property type="match status" value="1"/>
</dbReference>
<dbReference type="InterPro" id="IPR006009">
    <property type="entry name" value="GlcNAc_MurG"/>
</dbReference>
<dbReference type="InterPro" id="IPR007235">
    <property type="entry name" value="Glyco_trans_28_C"/>
</dbReference>
<dbReference type="InterPro" id="IPR004276">
    <property type="entry name" value="GlycoTrans_28_N"/>
</dbReference>
<dbReference type="NCBIfam" id="TIGR01133">
    <property type="entry name" value="murG"/>
    <property type="match status" value="1"/>
</dbReference>
<dbReference type="PANTHER" id="PTHR21015:SF22">
    <property type="entry name" value="GLYCOSYLTRANSFERASE"/>
    <property type="match status" value="1"/>
</dbReference>
<dbReference type="PANTHER" id="PTHR21015">
    <property type="entry name" value="UDP-N-ACETYLGLUCOSAMINE--N-ACETYLMURAMYL-(PENTAPEPTIDE) PYROPHOSPHORYL-UNDECAPRENOL N-ACETYLGLUCOSAMINE TRANSFERASE 1"/>
    <property type="match status" value="1"/>
</dbReference>
<dbReference type="Pfam" id="PF04101">
    <property type="entry name" value="Glyco_tran_28_C"/>
    <property type="match status" value="1"/>
</dbReference>
<dbReference type="Pfam" id="PF03033">
    <property type="entry name" value="Glyco_transf_28"/>
    <property type="match status" value="1"/>
</dbReference>
<dbReference type="SUPFAM" id="SSF53756">
    <property type="entry name" value="UDP-Glycosyltransferase/glycogen phosphorylase"/>
    <property type="match status" value="1"/>
</dbReference>
<organism>
    <name type="scientific">Thermus thermophilus (strain ATCC BAA-163 / DSM 7039 / HB27)</name>
    <dbReference type="NCBI Taxonomy" id="262724"/>
    <lineage>
        <taxon>Bacteria</taxon>
        <taxon>Thermotogati</taxon>
        <taxon>Deinococcota</taxon>
        <taxon>Deinococci</taxon>
        <taxon>Thermales</taxon>
        <taxon>Thermaceae</taxon>
        <taxon>Thermus</taxon>
    </lineage>
</organism>
<keyword id="KW-0131">Cell cycle</keyword>
<keyword id="KW-0132">Cell division</keyword>
<keyword id="KW-0997">Cell inner membrane</keyword>
<keyword id="KW-1003">Cell membrane</keyword>
<keyword id="KW-0133">Cell shape</keyword>
<keyword id="KW-0961">Cell wall biogenesis/degradation</keyword>
<keyword id="KW-0328">Glycosyltransferase</keyword>
<keyword id="KW-0472">Membrane</keyword>
<keyword id="KW-0573">Peptidoglycan synthesis</keyword>
<keyword id="KW-0808">Transferase</keyword>
<evidence type="ECO:0000255" key="1">
    <source>
        <dbReference type="HAMAP-Rule" id="MF_00033"/>
    </source>
</evidence>
<protein>
    <recommendedName>
        <fullName evidence="1">UDP-N-acetylglucosamine--N-acetylmuramyl-(pentapeptide) pyrophosphoryl-undecaprenol N-acetylglucosamine transferase</fullName>
        <ecNumber evidence="1">2.4.1.227</ecNumber>
    </recommendedName>
    <alternativeName>
        <fullName evidence="1">Undecaprenyl-PP-MurNAc-pentapeptide-UDPGlcNAc GlcNAc transferase</fullName>
    </alternativeName>
</protein>
<name>MURG_THET2</name>
<feature type="chain" id="PRO_0000315194" description="UDP-N-acetylglucosamine--N-acetylmuramyl-(pentapeptide) pyrophosphoryl-undecaprenol N-acetylglucosamine transferase">
    <location>
        <begin position="1"/>
        <end position="339"/>
    </location>
</feature>
<feature type="binding site" evidence="1">
    <location>
        <begin position="9"/>
        <end position="11"/>
    </location>
    <ligand>
        <name>UDP-N-acetyl-alpha-D-glucosamine</name>
        <dbReference type="ChEBI" id="CHEBI:57705"/>
    </ligand>
</feature>
<feature type="binding site" evidence="1">
    <location>
        <position position="119"/>
    </location>
    <ligand>
        <name>UDP-N-acetyl-alpha-D-glucosamine</name>
        <dbReference type="ChEBI" id="CHEBI:57705"/>
    </ligand>
</feature>
<feature type="binding site" evidence="1">
    <location>
        <position position="160"/>
    </location>
    <ligand>
        <name>UDP-N-acetyl-alpha-D-glucosamine</name>
        <dbReference type="ChEBI" id="CHEBI:57705"/>
    </ligand>
</feature>
<feature type="binding site" evidence="1">
    <location>
        <position position="188"/>
    </location>
    <ligand>
        <name>UDP-N-acetyl-alpha-D-glucosamine</name>
        <dbReference type="ChEBI" id="CHEBI:57705"/>
    </ligand>
</feature>
<feature type="binding site" evidence="1">
    <location>
        <position position="280"/>
    </location>
    <ligand>
        <name>UDP-N-acetyl-alpha-D-glucosamine</name>
        <dbReference type="ChEBI" id="CHEBI:57705"/>
    </ligand>
</feature>
<sequence length="339" mass="35974">MILLTGGGTGGHLFPALAVAEELRRRGHPVFYLGAEGGLEARLLPKTPIPHALIPAGKLDRSALRPQEAPKVLQGVLRAQALLRRLRPKAVLSTGGYAGFPGGMAASLLGIPLLLHEQNARLGLANRALAPLAKGLALSVPLALPAPLARKARVVGYPVREVRYPKDEAKRRLGFDPQRPLLLVLGGSQGSLELNERLPPVLKGLPVQVLHQVGERWVERFRPLEGEGYRVEGFVDTPLAMSAADLLLSRAGAGTLAEAAFHGLPAILFPLSPKLDGGAQLANARAYAQAGGAVLGAWDRLSSQILEALEDLEARRRAMARLSPEGAAARLADLLEAFL</sequence>
<reference key="1">
    <citation type="journal article" date="2004" name="Nat. Biotechnol.">
        <title>The genome sequence of the extreme thermophile Thermus thermophilus.</title>
        <authorList>
            <person name="Henne A."/>
            <person name="Brueggemann H."/>
            <person name="Raasch C."/>
            <person name="Wiezer A."/>
            <person name="Hartsch T."/>
            <person name="Liesegang H."/>
            <person name="Johann A."/>
            <person name="Lienard T."/>
            <person name="Gohl O."/>
            <person name="Martinez-Arias R."/>
            <person name="Jacobi C."/>
            <person name="Starkuviene V."/>
            <person name="Schlenczeck S."/>
            <person name="Dencker S."/>
            <person name="Huber R."/>
            <person name="Klenk H.-P."/>
            <person name="Kramer W."/>
            <person name="Merkl R."/>
            <person name="Gottschalk G."/>
            <person name="Fritz H.-J."/>
        </authorList>
    </citation>
    <scope>NUCLEOTIDE SEQUENCE [LARGE SCALE GENOMIC DNA]</scope>
    <source>
        <strain>ATCC BAA-163 / DSM 7039 / HB27</strain>
    </source>
</reference>